<evidence type="ECO:0000255" key="1">
    <source>
        <dbReference type="HAMAP-Rule" id="MF_00083"/>
    </source>
</evidence>
<protein>
    <recommendedName>
        <fullName evidence="1">Peptidyl-tRNA hydrolase</fullName>
        <shortName evidence="1">Pth</shortName>
        <ecNumber evidence="1">3.1.1.29</ecNumber>
    </recommendedName>
</protein>
<accession>A8MK43</accession>
<dbReference type="EC" id="3.1.1.29" evidence="1"/>
<dbReference type="EMBL" id="CP000853">
    <property type="protein sequence ID" value="ABW20175.1"/>
    <property type="molecule type" value="Genomic_DNA"/>
</dbReference>
<dbReference type="RefSeq" id="WP_012160482.1">
    <property type="nucleotide sequence ID" value="NC_009922.1"/>
</dbReference>
<dbReference type="SMR" id="A8MK43"/>
<dbReference type="STRING" id="350688.Clos_2644"/>
<dbReference type="KEGG" id="aoe:Clos_2644"/>
<dbReference type="eggNOG" id="COG0193">
    <property type="taxonomic scope" value="Bacteria"/>
</dbReference>
<dbReference type="HOGENOM" id="CLU_062456_4_1_9"/>
<dbReference type="OrthoDB" id="9800507at2"/>
<dbReference type="Proteomes" id="UP000000269">
    <property type="component" value="Chromosome"/>
</dbReference>
<dbReference type="GO" id="GO:0005737">
    <property type="term" value="C:cytoplasm"/>
    <property type="evidence" value="ECO:0007669"/>
    <property type="project" value="UniProtKB-SubCell"/>
</dbReference>
<dbReference type="GO" id="GO:0004045">
    <property type="term" value="F:peptidyl-tRNA hydrolase activity"/>
    <property type="evidence" value="ECO:0007669"/>
    <property type="project" value="UniProtKB-UniRule"/>
</dbReference>
<dbReference type="GO" id="GO:0000049">
    <property type="term" value="F:tRNA binding"/>
    <property type="evidence" value="ECO:0007669"/>
    <property type="project" value="UniProtKB-UniRule"/>
</dbReference>
<dbReference type="GO" id="GO:0006515">
    <property type="term" value="P:protein quality control for misfolded or incompletely synthesized proteins"/>
    <property type="evidence" value="ECO:0007669"/>
    <property type="project" value="UniProtKB-UniRule"/>
</dbReference>
<dbReference type="GO" id="GO:0072344">
    <property type="term" value="P:rescue of stalled ribosome"/>
    <property type="evidence" value="ECO:0007669"/>
    <property type="project" value="UniProtKB-UniRule"/>
</dbReference>
<dbReference type="CDD" id="cd00462">
    <property type="entry name" value="PTH"/>
    <property type="match status" value="1"/>
</dbReference>
<dbReference type="FunFam" id="3.40.50.1470:FF:000001">
    <property type="entry name" value="Peptidyl-tRNA hydrolase"/>
    <property type="match status" value="1"/>
</dbReference>
<dbReference type="Gene3D" id="3.40.50.1470">
    <property type="entry name" value="Peptidyl-tRNA hydrolase"/>
    <property type="match status" value="1"/>
</dbReference>
<dbReference type="HAMAP" id="MF_00083">
    <property type="entry name" value="Pept_tRNA_hydro_bact"/>
    <property type="match status" value="1"/>
</dbReference>
<dbReference type="InterPro" id="IPR001328">
    <property type="entry name" value="Pept_tRNA_hydro"/>
</dbReference>
<dbReference type="InterPro" id="IPR018171">
    <property type="entry name" value="Pept_tRNA_hydro_CS"/>
</dbReference>
<dbReference type="InterPro" id="IPR036416">
    <property type="entry name" value="Pept_tRNA_hydro_sf"/>
</dbReference>
<dbReference type="NCBIfam" id="TIGR00447">
    <property type="entry name" value="pth"/>
    <property type="match status" value="1"/>
</dbReference>
<dbReference type="PANTHER" id="PTHR17224">
    <property type="entry name" value="PEPTIDYL-TRNA HYDROLASE"/>
    <property type="match status" value="1"/>
</dbReference>
<dbReference type="PANTHER" id="PTHR17224:SF1">
    <property type="entry name" value="PEPTIDYL-TRNA HYDROLASE"/>
    <property type="match status" value="1"/>
</dbReference>
<dbReference type="Pfam" id="PF01195">
    <property type="entry name" value="Pept_tRNA_hydro"/>
    <property type="match status" value="1"/>
</dbReference>
<dbReference type="SUPFAM" id="SSF53178">
    <property type="entry name" value="Peptidyl-tRNA hydrolase-like"/>
    <property type="match status" value="1"/>
</dbReference>
<dbReference type="PROSITE" id="PS01195">
    <property type="entry name" value="PEPT_TRNA_HYDROL_1"/>
    <property type="match status" value="1"/>
</dbReference>
<dbReference type="PROSITE" id="PS01196">
    <property type="entry name" value="PEPT_TRNA_HYDROL_2"/>
    <property type="match status" value="1"/>
</dbReference>
<name>PTH_ALKOO</name>
<sequence length="185" mass="20539">MHIIVGLGNPGKKYDATRHNIGFEAIDMLAKRNNIEVKKLKHKALCGEGTIGGNKVLLVKPQTFMNLSGQSLLDIVQFYKVDPKNIVVLYDDIDIPVGTLRIREKGSSGTHNGMKSIIYLLQTDQFPRIRIGVGKPQFGDLADYVLGRFPKEEIPTMLETLERASQAVETLVKDGIAVSMNRYNG</sequence>
<gene>
    <name evidence="1" type="primary">pth</name>
    <name type="ordered locus">Clos_2644</name>
</gene>
<proteinExistence type="inferred from homology"/>
<keyword id="KW-0963">Cytoplasm</keyword>
<keyword id="KW-0378">Hydrolase</keyword>
<keyword id="KW-1185">Reference proteome</keyword>
<keyword id="KW-0694">RNA-binding</keyword>
<keyword id="KW-0820">tRNA-binding</keyword>
<organism>
    <name type="scientific">Alkaliphilus oremlandii (strain OhILAs)</name>
    <name type="common">Clostridium oremlandii (strain OhILAs)</name>
    <dbReference type="NCBI Taxonomy" id="350688"/>
    <lineage>
        <taxon>Bacteria</taxon>
        <taxon>Bacillati</taxon>
        <taxon>Bacillota</taxon>
        <taxon>Clostridia</taxon>
        <taxon>Peptostreptococcales</taxon>
        <taxon>Natronincolaceae</taxon>
        <taxon>Alkaliphilus</taxon>
    </lineage>
</organism>
<feature type="chain" id="PRO_1000057545" description="Peptidyl-tRNA hydrolase">
    <location>
        <begin position="1"/>
        <end position="185"/>
    </location>
</feature>
<feature type="active site" description="Proton acceptor" evidence="1">
    <location>
        <position position="19"/>
    </location>
</feature>
<feature type="binding site" evidence="1">
    <location>
        <position position="14"/>
    </location>
    <ligand>
        <name>tRNA</name>
        <dbReference type="ChEBI" id="CHEBI:17843"/>
    </ligand>
</feature>
<feature type="binding site" evidence="1">
    <location>
        <position position="64"/>
    </location>
    <ligand>
        <name>tRNA</name>
        <dbReference type="ChEBI" id="CHEBI:17843"/>
    </ligand>
</feature>
<feature type="binding site" evidence="1">
    <location>
        <position position="66"/>
    </location>
    <ligand>
        <name>tRNA</name>
        <dbReference type="ChEBI" id="CHEBI:17843"/>
    </ligand>
</feature>
<feature type="binding site" evidence="1">
    <location>
        <position position="112"/>
    </location>
    <ligand>
        <name>tRNA</name>
        <dbReference type="ChEBI" id="CHEBI:17843"/>
    </ligand>
</feature>
<feature type="site" description="Discriminates between blocked and unblocked aminoacyl-tRNA" evidence="1">
    <location>
        <position position="9"/>
    </location>
</feature>
<feature type="site" description="Stabilizes the basic form of H active site to accept a proton" evidence="1">
    <location>
        <position position="91"/>
    </location>
</feature>
<reference key="1">
    <citation type="submission" date="2007-10" db="EMBL/GenBank/DDBJ databases">
        <title>Complete genome of Alkaliphilus oremlandii OhILAs.</title>
        <authorList>
            <person name="Copeland A."/>
            <person name="Lucas S."/>
            <person name="Lapidus A."/>
            <person name="Barry K."/>
            <person name="Detter J.C."/>
            <person name="Glavina del Rio T."/>
            <person name="Hammon N."/>
            <person name="Israni S."/>
            <person name="Dalin E."/>
            <person name="Tice H."/>
            <person name="Pitluck S."/>
            <person name="Chain P."/>
            <person name="Malfatti S."/>
            <person name="Shin M."/>
            <person name="Vergez L."/>
            <person name="Schmutz J."/>
            <person name="Larimer F."/>
            <person name="Land M."/>
            <person name="Hauser L."/>
            <person name="Kyrpides N."/>
            <person name="Mikhailova N."/>
            <person name="Stolz J.F."/>
            <person name="Dawson A."/>
            <person name="Fisher E."/>
            <person name="Crable B."/>
            <person name="Perera E."/>
            <person name="Lisak J."/>
            <person name="Ranganathan M."/>
            <person name="Basu P."/>
            <person name="Richardson P."/>
        </authorList>
    </citation>
    <scope>NUCLEOTIDE SEQUENCE [LARGE SCALE GENOMIC DNA]</scope>
    <source>
        <strain>OhILAs</strain>
    </source>
</reference>
<comment type="function">
    <text evidence="1">Hydrolyzes ribosome-free peptidyl-tRNAs (with 1 or more amino acids incorporated), which drop off the ribosome during protein synthesis, or as a result of ribosome stalling.</text>
</comment>
<comment type="function">
    <text evidence="1">Catalyzes the release of premature peptidyl moieties from peptidyl-tRNA molecules trapped in stalled 50S ribosomal subunits, and thus maintains levels of free tRNAs and 50S ribosomes.</text>
</comment>
<comment type="catalytic activity">
    <reaction evidence="1">
        <text>an N-acyl-L-alpha-aminoacyl-tRNA + H2O = an N-acyl-L-amino acid + a tRNA + H(+)</text>
        <dbReference type="Rhea" id="RHEA:54448"/>
        <dbReference type="Rhea" id="RHEA-COMP:10123"/>
        <dbReference type="Rhea" id="RHEA-COMP:13883"/>
        <dbReference type="ChEBI" id="CHEBI:15377"/>
        <dbReference type="ChEBI" id="CHEBI:15378"/>
        <dbReference type="ChEBI" id="CHEBI:59874"/>
        <dbReference type="ChEBI" id="CHEBI:78442"/>
        <dbReference type="ChEBI" id="CHEBI:138191"/>
        <dbReference type="EC" id="3.1.1.29"/>
    </reaction>
</comment>
<comment type="subunit">
    <text evidence="1">Monomer.</text>
</comment>
<comment type="subcellular location">
    <subcellularLocation>
        <location evidence="1">Cytoplasm</location>
    </subcellularLocation>
</comment>
<comment type="similarity">
    <text evidence="1">Belongs to the PTH family.</text>
</comment>